<gene>
    <name evidence="1" type="primary">dapL</name>
    <name type="ordered locus">Dhaf_4564</name>
</gene>
<comment type="function">
    <text evidence="2">Involved in the synthesis of meso-diaminopimelate (m-DAP or DL-DAP), required for both lysine and peptidoglycan biosynthesis. Catalyzes the direct conversion of tetrahydrodipicolinate to LL-diaminopimelate. Is also able to catalyze the reverse reaction in vitro, i.e. the transamination of LL-diaminopimelate with 2-oxoglutarate to produce tetrahydrodipicolinate and glutamate. Can also use m-DAP instead of LL-DAP as the amino-group donor, and oxaloacetate or pyruvate as the amino-group acceptor.</text>
</comment>
<comment type="catalytic activity">
    <reaction evidence="1 2">
        <text>(2S,6S)-2,6-diaminopimelate + 2-oxoglutarate = (S)-2,3,4,5-tetrahydrodipicolinate + L-glutamate + H2O + H(+)</text>
        <dbReference type="Rhea" id="RHEA:23988"/>
        <dbReference type="ChEBI" id="CHEBI:15377"/>
        <dbReference type="ChEBI" id="CHEBI:15378"/>
        <dbReference type="ChEBI" id="CHEBI:16810"/>
        <dbReference type="ChEBI" id="CHEBI:16845"/>
        <dbReference type="ChEBI" id="CHEBI:29985"/>
        <dbReference type="ChEBI" id="CHEBI:57609"/>
        <dbReference type="EC" id="2.6.1.83"/>
    </reaction>
</comment>
<comment type="cofactor">
    <cofactor evidence="1">
        <name>pyridoxal 5'-phosphate</name>
        <dbReference type="ChEBI" id="CHEBI:597326"/>
    </cofactor>
</comment>
<comment type="biophysicochemical properties">
    <kinetics>
        <KM evidence="2">38.2 uM for LL-2,6-diaminopimelate</KM>
        <KM evidence="2">9.1 uM for L-2,3,4,5-tetrahydrodipicolinate</KM>
        <KM evidence="2">0.7 mM for 2-oxoglutarate</KM>
        <KM evidence="2">10.1 mM for glutamate</KM>
        <Vmax evidence="2">0.4 umol/min/mg enzyme for the forward reaction (tetrahydrodipicolinate synthesis)</Vmax>
        <Vmax evidence="2">0.007 umol/min/mg enzyme for the reverse reaction (LL-DAP synthesis)</Vmax>
    </kinetics>
</comment>
<comment type="pathway">
    <text evidence="1 2">Amino-acid biosynthesis; L-lysine biosynthesis via DAP pathway; LL-2,6-diaminopimelate from (S)-tetrahydrodipicolinate (aminotransferase route): step 1/1.</text>
</comment>
<comment type="subunit">
    <text evidence="1">Homodimer.</text>
</comment>
<comment type="similarity">
    <text evidence="1">Belongs to the class-I pyridoxal-phosphate-dependent aminotransferase family. LL-diaminopimelate aminotransferase subfamily.</text>
</comment>
<evidence type="ECO:0000255" key="1">
    <source>
        <dbReference type="HAMAP-Rule" id="MF_01642"/>
    </source>
</evidence>
<evidence type="ECO:0000269" key="2">
    <source>
    </source>
</evidence>
<evidence type="ECO:0000303" key="3">
    <source>
    </source>
</evidence>
<accession>Q18T09</accession>
<accession>B8FWR7</accession>
<feature type="chain" id="PRO_0000342231" description="LL-diaminopimelate aminotransferase">
    <location>
        <begin position="1"/>
        <end position="411"/>
    </location>
</feature>
<feature type="binding site" evidence="1">
    <location>
        <position position="15"/>
    </location>
    <ligand>
        <name>substrate</name>
    </ligand>
</feature>
<feature type="binding site" evidence="1">
    <location>
        <position position="42"/>
    </location>
    <ligand>
        <name>substrate</name>
    </ligand>
</feature>
<feature type="binding site" evidence="1">
    <location>
        <position position="72"/>
    </location>
    <ligand>
        <name>pyridoxal 5'-phosphate</name>
        <dbReference type="ChEBI" id="CHEBI:597326"/>
    </ligand>
</feature>
<feature type="binding site" evidence="1">
    <location>
        <begin position="108"/>
        <end position="109"/>
    </location>
    <ligand>
        <name>pyridoxal 5'-phosphate</name>
        <dbReference type="ChEBI" id="CHEBI:597326"/>
    </ligand>
</feature>
<feature type="binding site" evidence="1">
    <location>
        <position position="109"/>
    </location>
    <ligand>
        <name>substrate</name>
    </ligand>
</feature>
<feature type="binding site" evidence="1">
    <location>
        <position position="132"/>
    </location>
    <ligand>
        <name>pyridoxal 5'-phosphate</name>
        <dbReference type="ChEBI" id="CHEBI:597326"/>
    </ligand>
</feature>
<feature type="binding site" evidence="1">
    <location>
        <position position="132"/>
    </location>
    <ligand>
        <name>substrate</name>
    </ligand>
</feature>
<feature type="binding site" evidence="1">
    <location>
        <position position="188"/>
    </location>
    <ligand>
        <name>pyridoxal 5'-phosphate</name>
        <dbReference type="ChEBI" id="CHEBI:597326"/>
    </ligand>
</feature>
<feature type="binding site" evidence="1">
    <location>
        <position position="188"/>
    </location>
    <ligand>
        <name>substrate</name>
    </ligand>
</feature>
<feature type="binding site" evidence="1">
    <location>
        <position position="219"/>
    </location>
    <ligand>
        <name>pyridoxal 5'-phosphate</name>
        <dbReference type="ChEBI" id="CHEBI:597326"/>
    </ligand>
</feature>
<feature type="binding site" evidence="1">
    <location>
        <begin position="247"/>
        <end position="249"/>
    </location>
    <ligand>
        <name>pyridoxal 5'-phosphate</name>
        <dbReference type="ChEBI" id="CHEBI:597326"/>
    </ligand>
</feature>
<feature type="binding site" evidence="1">
    <location>
        <position position="258"/>
    </location>
    <ligand>
        <name>pyridoxal 5'-phosphate</name>
        <dbReference type="ChEBI" id="CHEBI:597326"/>
    </ligand>
</feature>
<feature type="binding site" evidence="1">
    <location>
        <position position="293"/>
    </location>
    <ligand>
        <name>pyridoxal 5'-phosphate</name>
        <dbReference type="ChEBI" id="CHEBI:597326"/>
    </ligand>
</feature>
<feature type="binding site" evidence="1">
    <location>
        <position position="293"/>
    </location>
    <ligand>
        <name>substrate</name>
    </ligand>
</feature>
<feature type="binding site" evidence="1">
    <location>
        <position position="389"/>
    </location>
    <ligand>
        <name>substrate</name>
    </ligand>
</feature>
<feature type="modified residue" description="N6-(pyridoxal phosphate)lysine" evidence="1">
    <location>
        <position position="250"/>
    </location>
</feature>
<organism>
    <name type="scientific">Desulfitobacterium hafniense (strain DSM 10664 / DCB-2)</name>
    <dbReference type="NCBI Taxonomy" id="272564"/>
    <lineage>
        <taxon>Bacteria</taxon>
        <taxon>Bacillati</taxon>
        <taxon>Bacillota</taxon>
        <taxon>Clostridia</taxon>
        <taxon>Eubacteriales</taxon>
        <taxon>Desulfitobacteriaceae</taxon>
        <taxon>Desulfitobacterium</taxon>
    </lineage>
</organism>
<sequence length="411" mass="45914">MAQINENYLKLPGSYLFSEIARRVNEFKVQNPDADIIRLGIGDVTRPLAPVVVEAMKQAVEEMGRAETFRGYGPEQGYDFLIEKIIANDYAPRGVQLGMDEVFVSDGAKSDTANFQEIFGVDNIMAVTDPVYPVYVDSNVMAGRTGNYDTEKGQYGRIIYLPCTEEGDMKPELPTAPVDMIYLCFPNNPTGMTLTKEELKVWVDYARENKAIILFDSAYEAFIREEGVPRSIYEVEGAREVAVEFRSFSKTAGFTGTRCAYTVVPKDIMIYDSTGEGHSLNKLWLRRQTTKFNGVSYPVQAGAAAVYTEEGKKQIQATIDYYMENARIIREGLQEAGFKVFGGVNAPYIWMKTPGTMGSWEFFDKLMTEAHVVGTPGAGFGANGEGFFRLTAFGTRENTEKAIERIKARMK</sequence>
<proteinExistence type="evidence at protein level"/>
<dbReference type="EC" id="2.6.1.83" evidence="1 2"/>
<dbReference type="EMBL" id="CP001336">
    <property type="protein sequence ID" value="ACL22565.1"/>
    <property type="molecule type" value="Genomic_DNA"/>
</dbReference>
<dbReference type="RefSeq" id="WP_015945308.1">
    <property type="nucleotide sequence ID" value="NC_011830.1"/>
</dbReference>
<dbReference type="SMR" id="Q18T09"/>
<dbReference type="KEGG" id="dhd:Dhaf_4564"/>
<dbReference type="HOGENOM" id="CLU_051433_0_0_9"/>
<dbReference type="BRENDA" id="2.6.1.83">
    <property type="organism ID" value="1880"/>
</dbReference>
<dbReference type="SABIO-RK" id="Q18T09"/>
<dbReference type="UniPathway" id="UPA00034">
    <property type="reaction ID" value="UER00466"/>
</dbReference>
<dbReference type="Proteomes" id="UP000007726">
    <property type="component" value="Chromosome"/>
</dbReference>
<dbReference type="GO" id="GO:0010285">
    <property type="term" value="F:L,L-diaminopimelate aminotransferase activity"/>
    <property type="evidence" value="ECO:0007669"/>
    <property type="project" value="UniProtKB-UniRule"/>
</dbReference>
<dbReference type="GO" id="GO:0030170">
    <property type="term" value="F:pyridoxal phosphate binding"/>
    <property type="evidence" value="ECO:0007669"/>
    <property type="project" value="UniProtKB-UniRule"/>
</dbReference>
<dbReference type="GO" id="GO:0033362">
    <property type="term" value="P:lysine biosynthetic process via diaminopimelate, diaminopimelate-aminotransferase pathway"/>
    <property type="evidence" value="ECO:0007669"/>
    <property type="project" value="UniProtKB-UniRule"/>
</dbReference>
<dbReference type="CDD" id="cd00609">
    <property type="entry name" value="AAT_like"/>
    <property type="match status" value="1"/>
</dbReference>
<dbReference type="FunFam" id="3.40.640.10:FF:000099">
    <property type="entry name" value="LL-diaminopimelate aminotransferase, chloroplastic"/>
    <property type="match status" value="1"/>
</dbReference>
<dbReference type="Gene3D" id="3.90.1150.10">
    <property type="entry name" value="Aspartate Aminotransferase, domain 1"/>
    <property type="match status" value="1"/>
</dbReference>
<dbReference type="Gene3D" id="3.40.640.10">
    <property type="entry name" value="Type I PLP-dependent aspartate aminotransferase-like (Major domain)"/>
    <property type="match status" value="1"/>
</dbReference>
<dbReference type="HAMAP" id="MF_01642">
    <property type="entry name" value="DapL_aminotrans_1"/>
    <property type="match status" value="1"/>
</dbReference>
<dbReference type="InterPro" id="IPR004839">
    <property type="entry name" value="Aminotransferase_I/II_large"/>
</dbReference>
<dbReference type="InterPro" id="IPR019942">
    <property type="entry name" value="DapL/ALD1"/>
</dbReference>
<dbReference type="InterPro" id="IPR015424">
    <property type="entry name" value="PyrdxlP-dep_Trfase"/>
</dbReference>
<dbReference type="InterPro" id="IPR015421">
    <property type="entry name" value="PyrdxlP-dep_Trfase_major"/>
</dbReference>
<dbReference type="InterPro" id="IPR015422">
    <property type="entry name" value="PyrdxlP-dep_Trfase_small"/>
</dbReference>
<dbReference type="NCBIfam" id="TIGR03542">
    <property type="entry name" value="DAPAT_plant"/>
    <property type="match status" value="1"/>
</dbReference>
<dbReference type="PANTHER" id="PTHR43144">
    <property type="entry name" value="AMINOTRANSFERASE"/>
    <property type="match status" value="1"/>
</dbReference>
<dbReference type="Pfam" id="PF00155">
    <property type="entry name" value="Aminotran_1_2"/>
    <property type="match status" value="1"/>
</dbReference>
<dbReference type="SUPFAM" id="SSF53383">
    <property type="entry name" value="PLP-dependent transferases"/>
    <property type="match status" value="1"/>
</dbReference>
<protein>
    <recommendedName>
        <fullName evidence="1 3">LL-diaminopimelate aminotransferase</fullName>
        <shortName evidence="1 3">DAP-AT</shortName>
        <shortName evidence="1 3">DAP-aminotransferase</shortName>
        <shortName evidence="1 3">LL-DAP-aminotransferase</shortName>
        <ecNumber evidence="1 2">2.6.1.83</ecNumber>
    </recommendedName>
</protein>
<reference key="1">
    <citation type="journal article" date="2012" name="BMC Microbiol.">
        <title>Genome sequence of Desulfitobacterium hafniense DCB-2, a Gram-positive anaerobe capable of dehalogenation and metal reduction.</title>
        <authorList>
            <person name="Kim S.H."/>
            <person name="Harzman C."/>
            <person name="Davis J.K."/>
            <person name="Hutcheson R."/>
            <person name="Broderick J.B."/>
            <person name="Marsh T.L."/>
            <person name="Tiedje J.M."/>
        </authorList>
    </citation>
    <scope>NUCLEOTIDE SEQUENCE [LARGE SCALE GENOMIC DNA]</scope>
    <source>
        <strain>DSM 10664 / DCB-2</strain>
    </source>
</reference>
<reference key="2">
    <citation type="journal article" date="2008" name="J. Bacteriol.">
        <title>Biochemical and phylogenetic characterization of a novel diaminopimelate biosynthesis pathway in prokaryotes identifies a diverged form of LL-diaminopimelate aminotransferase.</title>
        <authorList>
            <person name="Hudson A.O."/>
            <person name="Gilvarg C."/>
            <person name="Leustek T."/>
        </authorList>
    </citation>
    <scope>FUNCTION</scope>
    <scope>CATALYTIC ACTIVITY</scope>
    <scope>BIOPHYSICOCHEMICAL PROPERTIES</scope>
    <scope>SUBSTRATE SPECIFICITY</scope>
    <scope>PATHWAY</scope>
</reference>
<keyword id="KW-0032">Aminotransferase</keyword>
<keyword id="KW-0663">Pyridoxal phosphate</keyword>
<keyword id="KW-0808">Transferase</keyword>
<name>DAPAT_DESHD</name>